<comment type="function">
    <text>This protein is one of many from the eggshell of the silk moth.</text>
</comment>
<comment type="similarity">
    <text evidence="1">Belongs to the chorion protein family.</text>
</comment>
<accession>P08915</accession>
<feature type="chain" id="PRO_0000168180" description="Chorion class B protein M3A5">
    <location>
        <begin position="1" status="less than"/>
        <end position="91"/>
    </location>
</feature>
<feature type="region of interest" description="Central domain">
    <location>
        <begin position="1" status="less than"/>
        <end position="51"/>
    </location>
</feature>
<feature type="region of interest" description="Right arm (Gly-rich tandem repeats)">
    <location>
        <begin position="52"/>
        <end position="91"/>
    </location>
</feature>
<feature type="non-terminal residue">
    <location>
        <position position="1"/>
    </location>
</feature>
<dbReference type="EMBL" id="X12840">
    <property type="protein sequence ID" value="CAA31325.1"/>
    <property type="molecule type" value="mRNA"/>
</dbReference>
<dbReference type="PIR" id="S01421">
    <property type="entry name" value="S01421"/>
</dbReference>
<dbReference type="InParanoid" id="P08915"/>
<dbReference type="Proteomes" id="UP000005204">
    <property type="component" value="Unassembled WGS sequence"/>
</dbReference>
<dbReference type="GO" id="GO:0042600">
    <property type="term" value="C:egg chorion"/>
    <property type="evidence" value="ECO:0007669"/>
    <property type="project" value="InterPro"/>
</dbReference>
<dbReference type="GO" id="GO:0005213">
    <property type="term" value="F:structural constituent of egg chorion"/>
    <property type="evidence" value="ECO:0007669"/>
    <property type="project" value="InterPro"/>
</dbReference>
<dbReference type="GO" id="GO:0007304">
    <property type="term" value="P:chorion-containing eggshell formation"/>
    <property type="evidence" value="ECO:0007669"/>
    <property type="project" value="InterPro"/>
</dbReference>
<dbReference type="InterPro" id="IPR002635">
    <property type="entry name" value="Chorion"/>
</dbReference>
<dbReference type="Pfam" id="PF01723">
    <property type="entry name" value="Chorion_1"/>
    <property type="match status" value="1"/>
</dbReference>
<name>CHB3_BOMMO</name>
<organism>
    <name type="scientific">Bombyx mori</name>
    <name type="common">Silk moth</name>
    <dbReference type="NCBI Taxonomy" id="7091"/>
    <lineage>
        <taxon>Eukaryota</taxon>
        <taxon>Metazoa</taxon>
        <taxon>Ecdysozoa</taxon>
        <taxon>Arthropoda</taxon>
        <taxon>Hexapoda</taxon>
        <taxon>Insecta</taxon>
        <taxon>Pterygota</taxon>
        <taxon>Neoptera</taxon>
        <taxon>Endopterygota</taxon>
        <taxon>Lepidoptera</taxon>
        <taxon>Glossata</taxon>
        <taxon>Ditrysia</taxon>
        <taxon>Bombycoidea</taxon>
        <taxon>Bombycidae</taxon>
        <taxon>Bombycinae</taxon>
        <taxon>Bombyx</taxon>
    </lineage>
</organism>
<reference key="1">
    <citation type="journal article" date="1983" name="EMBO J.">
        <title>Structural features of B family chorion sequences in the silkmoth Bombyx mori, and their evolutionary implications.</title>
        <authorList>
            <person name="Tsitilou S.G."/>
            <person name="Rodakis G.C."/>
            <person name="Alexopoulou M."/>
            <person name="Kafatos F.C."/>
            <person name="Ito K."/>
            <person name="Iatrou K."/>
        </authorList>
    </citation>
    <scope>NUCLEOTIDE SEQUENCE [MRNA]</scope>
    <source>
        <strain>703</strain>
    </source>
</reference>
<protein>
    <recommendedName>
        <fullName>Chorion class B protein M3A5</fullName>
    </recommendedName>
</protein>
<keyword id="KW-1185">Reference proteome</keyword>
<keyword id="KW-0677">Repeat</keyword>
<evidence type="ECO:0000305" key="1"/>
<sequence length="91" mass="8645">VASENRYEGTVGVSGNLPFLGTADVAGEFPTAGIGEILYGCGNGAVGITREGGLGYGAGYGGGYGLGYGGYGGGYGLGYGGYGGCGCGCGY</sequence>
<proteinExistence type="evidence at transcript level"/>